<proteinExistence type="inferred from homology"/>
<name>MTNB_CAEEL</name>
<sequence length="263" mass="30005">MVEFVNDPNFKDLVVDTTIDNRNDEEPMTIRNFTELMIQFYKLGWMRGSGGAMGCISGSELMISPSALQKERIREQDVFVYNMKDKTEVQRPPNKRITVSSCSVLFSLIMKETGSECVIHTHSKCANLITQLIKSNVFEISHQEYIKGIYDPFSGKALKYSDTLTIPIIDNMPSESQLLEPIRGVLENYPQAIAVLVRNHGLFVWGPTWESTKIMTECIDYLLELSIEMLKNNIPLVNEEAFEKEDNLSDKMRTLMFGDMAPV</sequence>
<gene>
    <name type="ORF">ZC373.5</name>
</gene>
<reference key="1">
    <citation type="journal article" date="1998" name="Science">
        <title>Genome sequence of the nematode C. elegans: a platform for investigating biology.</title>
        <authorList>
            <consortium name="The C. elegans sequencing consortium"/>
        </authorList>
    </citation>
    <scope>NUCLEOTIDE SEQUENCE [LARGE SCALE GENOMIC DNA]</scope>
    <source>
        <strain>Bristol N2</strain>
    </source>
</reference>
<evidence type="ECO:0000255" key="1">
    <source>
        <dbReference type="HAMAP-Rule" id="MF_03116"/>
    </source>
</evidence>
<protein>
    <recommendedName>
        <fullName evidence="1">Probable methylthioribulose-1-phosphate dehydratase</fullName>
        <shortName evidence="1">MTRu-1-P dehydratase</shortName>
        <ecNumber evidence="1">4.2.1.109</ecNumber>
    </recommendedName>
</protein>
<feature type="chain" id="PRO_0000393794" description="Probable methylthioribulose-1-phosphate dehydratase">
    <location>
        <begin position="1"/>
        <end position="263"/>
    </location>
</feature>
<feature type="active site" description="Proton donor/acceptor" evidence="1">
    <location>
        <position position="144"/>
    </location>
</feature>
<feature type="binding site" evidence="1">
    <location>
        <position position="102"/>
    </location>
    <ligand>
        <name>substrate</name>
    </ligand>
</feature>
<feature type="binding site" evidence="1">
    <location>
        <position position="120"/>
    </location>
    <ligand>
        <name>Zn(2+)</name>
        <dbReference type="ChEBI" id="CHEBI:29105"/>
    </ligand>
</feature>
<feature type="binding site" evidence="1">
    <location>
        <position position="122"/>
    </location>
    <ligand>
        <name>Zn(2+)</name>
        <dbReference type="ChEBI" id="CHEBI:29105"/>
    </ligand>
</feature>
<feature type="binding site" evidence="1">
    <location>
        <position position="200"/>
    </location>
    <ligand>
        <name>Zn(2+)</name>
        <dbReference type="ChEBI" id="CHEBI:29105"/>
    </ligand>
</feature>
<comment type="function">
    <text evidence="1">Catalyzes the dehydration of methylthioribulose-1-phosphate (MTRu-1-P) into 2,3-diketo-5-methylthiopentyl-1-phosphate (DK-MTP-1-P).</text>
</comment>
<comment type="catalytic activity">
    <reaction evidence="1">
        <text>5-(methylsulfanyl)-D-ribulose 1-phosphate = 5-methylsulfanyl-2,3-dioxopentyl phosphate + H2O</text>
        <dbReference type="Rhea" id="RHEA:15549"/>
        <dbReference type="ChEBI" id="CHEBI:15377"/>
        <dbReference type="ChEBI" id="CHEBI:58548"/>
        <dbReference type="ChEBI" id="CHEBI:58828"/>
        <dbReference type="EC" id="4.2.1.109"/>
    </reaction>
</comment>
<comment type="cofactor">
    <cofactor evidence="1">
        <name>Zn(2+)</name>
        <dbReference type="ChEBI" id="CHEBI:29105"/>
    </cofactor>
    <text evidence="1">Binds 1 zinc ion per subunit.</text>
</comment>
<comment type="pathway">
    <text evidence="1">Amino-acid biosynthesis; L-methionine biosynthesis via salvage pathway; L-methionine from S-methyl-5-thio-alpha-D-ribose 1-phosphate: step 2/6.</text>
</comment>
<comment type="subcellular location">
    <subcellularLocation>
        <location evidence="1">Cytoplasm</location>
    </subcellularLocation>
</comment>
<comment type="similarity">
    <text evidence="1">Belongs to the aldolase class II family. MtnB subfamily.</text>
</comment>
<organism>
    <name type="scientific">Caenorhabditis elegans</name>
    <dbReference type="NCBI Taxonomy" id="6239"/>
    <lineage>
        <taxon>Eukaryota</taxon>
        <taxon>Metazoa</taxon>
        <taxon>Ecdysozoa</taxon>
        <taxon>Nematoda</taxon>
        <taxon>Chromadorea</taxon>
        <taxon>Rhabditida</taxon>
        <taxon>Rhabditina</taxon>
        <taxon>Rhabditomorpha</taxon>
        <taxon>Rhabditoidea</taxon>
        <taxon>Rhabditidae</taxon>
        <taxon>Peloderinae</taxon>
        <taxon>Caenorhabditis</taxon>
    </lineage>
</organism>
<keyword id="KW-0028">Amino-acid biosynthesis</keyword>
<keyword id="KW-0963">Cytoplasm</keyword>
<keyword id="KW-0456">Lyase</keyword>
<keyword id="KW-0479">Metal-binding</keyword>
<keyword id="KW-0486">Methionine biosynthesis</keyword>
<keyword id="KW-1185">Reference proteome</keyword>
<keyword id="KW-0862">Zinc</keyword>
<accession>Q23261</accession>
<dbReference type="EC" id="4.2.1.109" evidence="1"/>
<dbReference type="EMBL" id="Z49131">
    <property type="protein sequence ID" value="CAA88977.2"/>
    <property type="molecule type" value="Genomic_DNA"/>
</dbReference>
<dbReference type="PIR" id="T27523">
    <property type="entry name" value="T27523"/>
</dbReference>
<dbReference type="RefSeq" id="NP_509690.2">
    <property type="nucleotide sequence ID" value="NM_077289.7"/>
</dbReference>
<dbReference type="SMR" id="Q23261"/>
<dbReference type="BioGRID" id="46133">
    <property type="interactions" value="2"/>
</dbReference>
<dbReference type="FunCoup" id="Q23261">
    <property type="interactions" value="1973"/>
</dbReference>
<dbReference type="IntAct" id="Q23261">
    <property type="interactions" value="1"/>
</dbReference>
<dbReference type="STRING" id="6239.ZC373.5.1"/>
<dbReference type="PaxDb" id="6239-ZC373.5"/>
<dbReference type="PeptideAtlas" id="Q23261"/>
<dbReference type="EnsemblMetazoa" id="ZC373.5.1">
    <property type="protein sequence ID" value="ZC373.5.1"/>
    <property type="gene ID" value="WBGene00013870"/>
</dbReference>
<dbReference type="GeneID" id="181218"/>
<dbReference type="KEGG" id="cel:CELE_ZC373.5"/>
<dbReference type="UCSC" id="ZC373.5">
    <property type="organism name" value="c. elegans"/>
</dbReference>
<dbReference type="AGR" id="WB:WBGene00013870"/>
<dbReference type="CTD" id="181218"/>
<dbReference type="WormBase" id="ZC373.5">
    <property type="protein sequence ID" value="CE37460"/>
    <property type="gene ID" value="WBGene00013870"/>
</dbReference>
<dbReference type="eggNOG" id="KOG2631">
    <property type="taxonomic scope" value="Eukaryota"/>
</dbReference>
<dbReference type="GeneTree" id="ENSGT00390000001680"/>
<dbReference type="HOGENOM" id="CLU_006033_4_0_1"/>
<dbReference type="InParanoid" id="Q23261"/>
<dbReference type="OMA" id="WFPGTSG"/>
<dbReference type="OrthoDB" id="191080at2759"/>
<dbReference type="PhylomeDB" id="Q23261"/>
<dbReference type="UniPathway" id="UPA00904">
    <property type="reaction ID" value="UER00875"/>
</dbReference>
<dbReference type="PRO" id="PR:Q23261"/>
<dbReference type="Proteomes" id="UP000001940">
    <property type="component" value="Chromosome X"/>
</dbReference>
<dbReference type="Bgee" id="WBGene00013870">
    <property type="expression patterns" value="Expressed in pharyngeal muscle cell (C elegans) and 3 other cell types or tissues"/>
</dbReference>
<dbReference type="GO" id="GO:0005737">
    <property type="term" value="C:cytoplasm"/>
    <property type="evidence" value="ECO:0000318"/>
    <property type="project" value="GO_Central"/>
</dbReference>
<dbReference type="GO" id="GO:0046570">
    <property type="term" value="F:methylthioribulose 1-phosphate dehydratase activity"/>
    <property type="evidence" value="ECO:0000250"/>
    <property type="project" value="UniProtKB"/>
</dbReference>
<dbReference type="GO" id="GO:0008270">
    <property type="term" value="F:zinc ion binding"/>
    <property type="evidence" value="ECO:0000250"/>
    <property type="project" value="UniProtKB"/>
</dbReference>
<dbReference type="GO" id="GO:0019509">
    <property type="term" value="P:L-methionine salvage from methylthioadenosine"/>
    <property type="evidence" value="ECO:0000318"/>
    <property type="project" value="GO_Central"/>
</dbReference>
<dbReference type="FunFam" id="3.40.225.10:FF:000003">
    <property type="entry name" value="Methylthioribulose-1-phosphate dehydratase"/>
    <property type="match status" value="1"/>
</dbReference>
<dbReference type="Gene3D" id="3.40.225.10">
    <property type="entry name" value="Class II aldolase/adducin N-terminal domain"/>
    <property type="match status" value="1"/>
</dbReference>
<dbReference type="HAMAP" id="MF_03116">
    <property type="entry name" value="Salvage_MtnB_euk"/>
    <property type="match status" value="1"/>
</dbReference>
<dbReference type="InterPro" id="IPR001303">
    <property type="entry name" value="Aldolase_II/adducin_N"/>
</dbReference>
<dbReference type="InterPro" id="IPR036409">
    <property type="entry name" value="Aldolase_II/adducin_N_sf"/>
</dbReference>
<dbReference type="InterPro" id="IPR017714">
    <property type="entry name" value="MethylthioRu-1-P_deHdtase_MtnB"/>
</dbReference>
<dbReference type="InterPro" id="IPR027514">
    <property type="entry name" value="Salvage_MtnB_euk"/>
</dbReference>
<dbReference type="NCBIfam" id="TIGR03328">
    <property type="entry name" value="salvage_mtnB"/>
    <property type="match status" value="1"/>
</dbReference>
<dbReference type="PANTHER" id="PTHR10640">
    <property type="entry name" value="METHYLTHIORIBULOSE-1-PHOSPHATE DEHYDRATASE"/>
    <property type="match status" value="1"/>
</dbReference>
<dbReference type="PANTHER" id="PTHR10640:SF7">
    <property type="entry name" value="METHYLTHIORIBULOSE-1-PHOSPHATE DEHYDRATASE"/>
    <property type="match status" value="1"/>
</dbReference>
<dbReference type="Pfam" id="PF00596">
    <property type="entry name" value="Aldolase_II"/>
    <property type="match status" value="1"/>
</dbReference>
<dbReference type="SMART" id="SM01007">
    <property type="entry name" value="Aldolase_II"/>
    <property type="match status" value="1"/>
</dbReference>
<dbReference type="SUPFAM" id="SSF53639">
    <property type="entry name" value="AraD/HMP-PK domain-like"/>
    <property type="match status" value="1"/>
</dbReference>